<feature type="initiator methionine" description="Removed" evidence="1">
    <location>
        <position position="1"/>
    </location>
</feature>
<feature type="chain" id="PRO_0000275763" description="Photosystem II reaction center protein H">
    <location>
        <begin position="2"/>
        <end position="73"/>
    </location>
</feature>
<feature type="transmembrane region" description="Helical" evidence="2">
    <location>
        <begin position="41"/>
        <end position="61"/>
    </location>
</feature>
<feature type="region of interest" description="Disordered" evidence="3">
    <location>
        <begin position="1"/>
        <end position="20"/>
    </location>
</feature>
<feature type="compositionally biased region" description="Polar residues" evidence="3">
    <location>
        <begin position="1"/>
        <end position="12"/>
    </location>
</feature>
<feature type="modified residue" description="Phosphothreonine" evidence="2">
    <location>
        <position position="3"/>
    </location>
</feature>
<feature type="modified residue" description="Phosphothreonine" evidence="2">
    <location>
        <position position="5"/>
    </location>
</feature>
<sequence length="73" mass="7759">MATQTVENSSRSGPRRTAVGDLLKPLNSEYGKVAPGWGTTPLMGVAMALFAVFLSIILEIYNSSVLLDGISMN</sequence>
<geneLocation type="chloroplast"/>
<comment type="function">
    <text evidence="2">One of the components of the core complex of photosystem II (PSII), required for its stability and/or assembly. PSII is a light-driven water:plastoquinone oxidoreductase that uses light energy to abstract electrons from H(2)O, generating O(2) and a proton gradient subsequently used for ATP formation. It consists of a core antenna complex that captures photons, and an electron transfer chain that converts photonic excitation into a charge separation.</text>
</comment>
<comment type="subunit">
    <text evidence="2">PSII is composed of 1 copy each of membrane proteins PsbA, PsbB, PsbC, PsbD, PsbE, PsbF, PsbH, PsbI, PsbJ, PsbK, PsbL, PsbM, PsbT, PsbX, PsbY, PsbZ, Psb30/Ycf12, at least 3 peripheral proteins of the oxygen-evolving complex and a large number of cofactors. It forms dimeric complexes.</text>
</comment>
<comment type="subcellular location">
    <subcellularLocation>
        <location evidence="2">Plastid</location>
        <location evidence="2">Chloroplast thylakoid membrane</location>
        <topology evidence="2">Single-pass membrane protein</topology>
    </subcellularLocation>
</comment>
<comment type="PTM">
    <text evidence="2">Phosphorylation is a light-dependent reaction catalyzed by a membrane-bound kinase; phosphorylation occurs on Thr residue(s) in the N-terminus of the protein.</text>
</comment>
<comment type="similarity">
    <text evidence="2">Belongs to the PsbH family.</text>
</comment>
<accession>Q33C03</accession>
<gene>
    <name evidence="2" type="primary">psbH</name>
</gene>
<reference key="1">
    <citation type="journal article" date="2006" name="Mol. Genet. Genomics">
        <title>The chloroplast genome of Nicotiana sylvestris and Nicotiana tomentosiformis: complete sequencing confirms that the Nicotiana sylvestris progenitor is the maternal genome donor of Nicotiana tabacum.</title>
        <authorList>
            <person name="Yukawa M."/>
            <person name="Tsudzuki T."/>
            <person name="Sugiura M."/>
        </authorList>
    </citation>
    <scope>NUCLEOTIDE SEQUENCE [LARGE SCALE GENOMIC DNA]</scope>
</reference>
<protein>
    <recommendedName>
        <fullName evidence="2">Photosystem II reaction center protein H</fullName>
        <shortName evidence="2">PSII-H</shortName>
    </recommendedName>
    <alternativeName>
        <fullName evidence="2">Photosystem II 10 kDa phosphoprotein</fullName>
    </alternativeName>
</protein>
<organism>
    <name type="scientific">Nicotiana tomentosiformis</name>
    <name type="common">Tobacco</name>
    <dbReference type="NCBI Taxonomy" id="4098"/>
    <lineage>
        <taxon>Eukaryota</taxon>
        <taxon>Viridiplantae</taxon>
        <taxon>Streptophyta</taxon>
        <taxon>Embryophyta</taxon>
        <taxon>Tracheophyta</taxon>
        <taxon>Spermatophyta</taxon>
        <taxon>Magnoliopsida</taxon>
        <taxon>eudicotyledons</taxon>
        <taxon>Gunneridae</taxon>
        <taxon>Pentapetalae</taxon>
        <taxon>asterids</taxon>
        <taxon>lamiids</taxon>
        <taxon>Solanales</taxon>
        <taxon>Solanaceae</taxon>
        <taxon>Nicotianoideae</taxon>
        <taxon>Nicotianeae</taxon>
        <taxon>Nicotiana</taxon>
    </lineage>
</organism>
<evidence type="ECO:0000250" key="1">
    <source>
        <dbReference type="UniProtKB" id="P56780"/>
    </source>
</evidence>
<evidence type="ECO:0000255" key="2">
    <source>
        <dbReference type="HAMAP-Rule" id="MF_00752"/>
    </source>
</evidence>
<evidence type="ECO:0000256" key="3">
    <source>
        <dbReference type="SAM" id="MobiDB-lite"/>
    </source>
</evidence>
<proteinExistence type="inferred from homology"/>
<name>PSBH_NICTO</name>
<dbReference type="EMBL" id="AB240139">
    <property type="protein sequence ID" value="BAE48032.1"/>
    <property type="molecule type" value="Genomic_DNA"/>
</dbReference>
<dbReference type="RefSeq" id="YP_398893.1">
    <property type="nucleotide sequence ID" value="NC_007602.1"/>
</dbReference>
<dbReference type="SMR" id="Q33C03"/>
<dbReference type="GeneID" id="3776373"/>
<dbReference type="KEGG" id="nto:3776373"/>
<dbReference type="OrthoDB" id="1855002at2759"/>
<dbReference type="GO" id="GO:0009535">
    <property type="term" value="C:chloroplast thylakoid membrane"/>
    <property type="evidence" value="ECO:0007669"/>
    <property type="project" value="UniProtKB-SubCell"/>
</dbReference>
<dbReference type="GO" id="GO:0009523">
    <property type="term" value="C:photosystem II"/>
    <property type="evidence" value="ECO:0007669"/>
    <property type="project" value="UniProtKB-KW"/>
</dbReference>
<dbReference type="GO" id="GO:0042301">
    <property type="term" value="F:phosphate ion binding"/>
    <property type="evidence" value="ECO:0007669"/>
    <property type="project" value="InterPro"/>
</dbReference>
<dbReference type="GO" id="GO:0015979">
    <property type="term" value="P:photosynthesis"/>
    <property type="evidence" value="ECO:0007669"/>
    <property type="project" value="UniProtKB-UniRule"/>
</dbReference>
<dbReference type="GO" id="GO:0050821">
    <property type="term" value="P:protein stabilization"/>
    <property type="evidence" value="ECO:0007669"/>
    <property type="project" value="InterPro"/>
</dbReference>
<dbReference type="FunFam" id="1.20.5.880:FF:000001">
    <property type="entry name" value="Photosystem II reaction center protein H"/>
    <property type="match status" value="1"/>
</dbReference>
<dbReference type="Gene3D" id="1.20.5.880">
    <property type="entry name" value="Photosystem II reaction center protein H"/>
    <property type="match status" value="1"/>
</dbReference>
<dbReference type="HAMAP" id="MF_00752">
    <property type="entry name" value="PSII_PsbH"/>
    <property type="match status" value="1"/>
</dbReference>
<dbReference type="InterPro" id="IPR001056">
    <property type="entry name" value="PSII_PsbH"/>
</dbReference>
<dbReference type="InterPro" id="IPR036863">
    <property type="entry name" value="PSII_PsbH_sf"/>
</dbReference>
<dbReference type="NCBIfam" id="NF002728">
    <property type="entry name" value="PRK02624.1"/>
    <property type="match status" value="1"/>
</dbReference>
<dbReference type="PANTHER" id="PTHR34469">
    <property type="entry name" value="PHOTOSYSTEM II REACTION CENTER PROTEIN H"/>
    <property type="match status" value="1"/>
</dbReference>
<dbReference type="PANTHER" id="PTHR34469:SF4">
    <property type="entry name" value="PHOTOSYSTEM II REACTION CENTER PROTEIN H"/>
    <property type="match status" value="1"/>
</dbReference>
<dbReference type="Pfam" id="PF00737">
    <property type="entry name" value="PsbH"/>
    <property type="match status" value="1"/>
</dbReference>
<dbReference type="SUPFAM" id="SSF161025">
    <property type="entry name" value="Photosystem II 10 kDa phosphoprotein PsbH"/>
    <property type="match status" value="1"/>
</dbReference>
<keyword id="KW-0150">Chloroplast</keyword>
<keyword id="KW-0472">Membrane</keyword>
<keyword id="KW-0597">Phosphoprotein</keyword>
<keyword id="KW-0602">Photosynthesis</keyword>
<keyword id="KW-0604">Photosystem II</keyword>
<keyword id="KW-0934">Plastid</keyword>
<keyword id="KW-0793">Thylakoid</keyword>
<keyword id="KW-0812">Transmembrane</keyword>
<keyword id="KW-1133">Transmembrane helix</keyword>